<dbReference type="EMBL" id="CP000653">
    <property type="protein sequence ID" value="ABP61503.1"/>
    <property type="molecule type" value="Genomic_DNA"/>
</dbReference>
<dbReference type="RefSeq" id="WP_015959836.1">
    <property type="nucleotide sequence ID" value="NC_009436.1"/>
</dbReference>
<dbReference type="SMR" id="A4WCS3"/>
<dbReference type="STRING" id="399742.Ent638_2838"/>
<dbReference type="GeneID" id="93305805"/>
<dbReference type="KEGG" id="ent:Ent638_2838"/>
<dbReference type="eggNOG" id="COG3013">
    <property type="taxonomic scope" value="Bacteria"/>
</dbReference>
<dbReference type="HOGENOM" id="CLU_101021_1_0_6"/>
<dbReference type="OrthoDB" id="5589463at2"/>
<dbReference type="Proteomes" id="UP000000230">
    <property type="component" value="Chromosome"/>
</dbReference>
<dbReference type="Gene3D" id="1.10.287.680">
    <property type="entry name" value="Helix hairpin bin"/>
    <property type="match status" value="1"/>
</dbReference>
<dbReference type="Gene3D" id="1.10.3190.10">
    <property type="entry name" value="yfbu gene product, domain 2"/>
    <property type="match status" value="1"/>
</dbReference>
<dbReference type="HAMAP" id="MF_00762">
    <property type="entry name" value="UPF0304"/>
    <property type="match status" value="1"/>
</dbReference>
<dbReference type="InterPro" id="IPR005587">
    <property type="entry name" value="UPF0304_YfbU"/>
</dbReference>
<dbReference type="InterPro" id="IPR023146">
    <property type="entry name" value="YfbU_alpha-helical_sf"/>
</dbReference>
<dbReference type="InterPro" id="IPR023145">
    <property type="entry name" value="YfbU_helix-hairpin_sf"/>
</dbReference>
<dbReference type="NCBIfam" id="NF003936">
    <property type="entry name" value="PRK05445.1"/>
    <property type="match status" value="1"/>
</dbReference>
<dbReference type="Pfam" id="PF03887">
    <property type="entry name" value="YfbU"/>
    <property type="match status" value="1"/>
</dbReference>
<dbReference type="PIRSF" id="PIRSF006272">
    <property type="entry name" value="UCP006272"/>
    <property type="match status" value="1"/>
</dbReference>
<dbReference type="SUPFAM" id="SSF116960">
    <property type="entry name" value="YfbU-like"/>
    <property type="match status" value="1"/>
</dbReference>
<name>Y2838_ENT38</name>
<gene>
    <name type="ordered locus">Ent638_2838</name>
</gene>
<comment type="similarity">
    <text evidence="1">Belongs to the UPF0304 family.</text>
</comment>
<reference key="1">
    <citation type="journal article" date="2010" name="PLoS Genet.">
        <title>Genome sequence of the plant growth promoting endophytic bacterium Enterobacter sp. 638.</title>
        <authorList>
            <person name="Taghavi S."/>
            <person name="van der Lelie D."/>
            <person name="Hoffman A."/>
            <person name="Zhang Y.B."/>
            <person name="Walla M.D."/>
            <person name="Vangronsveld J."/>
            <person name="Newman L."/>
            <person name="Monchy S."/>
        </authorList>
    </citation>
    <scope>NUCLEOTIDE SEQUENCE [LARGE SCALE GENOMIC DNA]</scope>
    <source>
        <strain>638</strain>
    </source>
</reference>
<sequence length="164" mass="19618">MEMTNAQRLILSNQYKMMTMLDPDNAERYRRLQTIVERGFGLQMRELDREFGELKEETCRTVIDIMEMYHALHVSWTNLKDAQTIDERRVTFLGFDVATESRYLSYVRFMVNTEGRYTHFDAGTHGFNSQTPMWEKYQRMLSVWHSCPRQYHLSSNEIQQIINA</sequence>
<protein>
    <recommendedName>
        <fullName evidence="1">UPF0304 protein Ent638_2838</fullName>
    </recommendedName>
</protein>
<accession>A4WCS3</accession>
<proteinExistence type="inferred from homology"/>
<feature type="chain" id="PRO_1000062210" description="UPF0304 protein Ent638_2838">
    <location>
        <begin position="1"/>
        <end position="164"/>
    </location>
</feature>
<organism>
    <name type="scientific">Enterobacter sp. (strain 638)</name>
    <dbReference type="NCBI Taxonomy" id="399742"/>
    <lineage>
        <taxon>Bacteria</taxon>
        <taxon>Pseudomonadati</taxon>
        <taxon>Pseudomonadota</taxon>
        <taxon>Gammaproteobacteria</taxon>
        <taxon>Enterobacterales</taxon>
        <taxon>Enterobacteriaceae</taxon>
        <taxon>Enterobacter</taxon>
    </lineage>
</organism>
<evidence type="ECO:0000255" key="1">
    <source>
        <dbReference type="HAMAP-Rule" id="MF_00762"/>
    </source>
</evidence>